<protein>
    <recommendedName>
        <fullName evidence="6">Gamma-glutamylcyclotransferase 2-3</fullName>
        <shortName evidence="5">AtGGCT2;3</shortName>
        <ecNumber evidence="4">4.3.2.7</ecNumber>
    </recommendedName>
    <alternativeName>
        <fullName evidence="5">Gamma-glutamyl cyclotransferase 2;3</fullName>
    </alternativeName>
</protein>
<gene>
    <name evidence="5" type="primary">GGCT2;3</name>
    <name evidence="7" type="ordered locus">At1g44790</name>
    <name evidence="8" type="ORF">T12C22.6</name>
</gene>
<sequence length="199" mass="22229">MAMWVFGYGSLIWKTGFPFDESLPGFIKGYRRVFHQGSTDHRGTPDFPGRTVTLEAAHEEVCCGVAYKITKEEDKRDALLHLEVREKQYDQKEYLDFFTDSNASEPAVAGVMVYIASPDKKSNNNYLGPAPLEDIAKQIVKAKGPSGPNRDYLFNLEEALAQLGFKDKHVTDLANQVRHILSESEELDIDATAATANNV</sequence>
<dbReference type="EC" id="4.3.2.7" evidence="4"/>
<dbReference type="EMBL" id="AC020576">
    <property type="protein sequence ID" value="AAF78262.1"/>
    <property type="status" value="ALT_SEQ"/>
    <property type="molecule type" value="Genomic_DNA"/>
</dbReference>
<dbReference type="EMBL" id="CP002684">
    <property type="protein sequence ID" value="AEE32052.1"/>
    <property type="molecule type" value="Genomic_DNA"/>
</dbReference>
<dbReference type="EMBL" id="AF332442">
    <property type="protein sequence ID" value="AAG48805.1"/>
    <property type="molecule type" value="mRNA"/>
</dbReference>
<dbReference type="EMBL" id="BT006192">
    <property type="protein sequence ID" value="AAP06821.1"/>
    <property type="molecule type" value="mRNA"/>
</dbReference>
<dbReference type="EMBL" id="AK228371">
    <property type="protein sequence ID" value="BAF00310.1"/>
    <property type="molecule type" value="mRNA"/>
</dbReference>
<dbReference type="PIR" id="H96506">
    <property type="entry name" value="H96506"/>
</dbReference>
<dbReference type="RefSeq" id="NP_564490.1">
    <property type="nucleotide sequence ID" value="NM_103560.3"/>
</dbReference>
<dbReference type="SMR" id="Q84QC1"/>
<dbReference type="FunCoup" id="Q84QC1">
    <property type="interactions" value="2634"/>
</dbReference>
<dbReference type="STRING" id="3702.Q84QC1"/>
<dbReference type="PaxDb" id="3702-AT1G44790.1"/>
<dbReference type="ProteomicsDB" id="247067"/>
<dbReference type="DNASU" id="841043"/>
<dbReference type="EnsemblPlants" id="AT1G44790.1">
    <property type="protein sequence ID" value="AT1G44790.1"/>
    <property type="gene ID" value="AT1G44790"/>
</dbReference>
<dbReference type="GeneID" id="841043"/>
<dbReference type="Gramene" id="AT1G44790.1">
    <property type="protein sequence ID" value="AT1G44790.1"/>
    <property type="gene ID" value="AT1G44790"/>
</dbReference>
<dbReference type="KEGG" id="ath:AT1G44790"/>
<dbReference type="Araport" id="AT1G44790"/>
<dbReference type="TAIR" id="AT1G44790"/>
<dbReference type="eggNOG" id="KOG3182">
    <property type="taxonomic scope" value="Eukaryota"/>
</dbReference>
<dbReference type="HOGENOM" id="CLU_070703_2_2_1"/>
<dbReference type="InParanoid" id="Q84QC1"/>
<dbReference type="OMA" id="DHREKDG"/>
<dbReference type="PhylomeDB" id="Q84QC1"/>
<dbReference type="SABIO-RK" id="Q84QC1"/>
<dbReference type="PRO" id="PR:Q84QC1"/>
<dbReference type="Proteomes" id="UP000006548">
    <property type="component" value="Chromosome 1"/>
</dbReference>
<dbReference type="ExpressionAtlas" id="Q84QC1">
    <property type="expression patterns" value="baseline and differential"/>
</dbReference>
<dbReference type="GO" id="GO:0005737">
    <property type="term" value="C:cytoplasm"/>
    <property type="evidence" value="ECO:0000250"/>
    <property type="project" value="UniProtKB"/>
</dbReference>
<dbReference type="GO" id="GO:0005829">
    <property type="term" value="C:cytosol"/>
    <property type="evidence" value="ECO:0007005"/>
    <property type="project" value="TAIR"/>
</dbReference>
<dbReference type="GO" id="GO:0003839">
    <property type="term" value="F:gamma-glutamylcyclotransferase activity"/>
    <property type="evidence" value="ECO:0007669"/>
    <property type="project" value="UniProtKB-EC"/>
</dbReference>
<dbReference type="GO" id="GO:0061928">
    <property type="term" value="F:glutathione specific gamma-glutamylcyclotransferase activity"/>
    <property type="evidence" value="ECO:0000314"/>
    <property type="project" value="UniProtKB"/>
</dbReference>
<dbReference type="GO" id="GO:0006751">
    <property type="term" value="P:glutathione catabolic process"/>
    <property type="evidence" value="ECO:0000314"/>
    <property type="project" value="UniProtKB"/>
</dbReference>
<dbReference type="CDD" id="cd06661">
    <property type="entry name" value="GGCT_like"/>
    <property type="match status" value="1"/>
</dbReference>
<dbReference type="FunFam" id="3.10.490.10:FF:000002">
    <property type="entry name" value="Gamma-glutamylcyclotransferase"/>
    <property type="match status" value="1"/>
</dbReference>
<dbReference type="Gene3D" id="3.10.490.10">
    <property type="entry name" value="Gamma-glutamyl cyclotransferase-like"/>
    <property type="match status" value="1"/>
</dbReference>
<dbReference type="InterPro" id="IPR006840">
    <property type="entry name" value="ChaC"/>
</dbReference>
<dbReference type="InterPro" id="IPR013024">
    <property type="entry name" value="GGCT-like"/>
</dbReference>
<dbReference type="InterPro" id="IPR036568">
    <property type="entry name" value="GGCT-like_sf"/>
</dbReference>
<dbReference type="PANTHER" id="PTHR12192">
    <property type="entry name" value="CATION TRANSPORT PROTEIN CHAC-RELATED"/>
    <property type="match status" value="1"/>
</dbReference>
<dbReference type="PANTHER" id="PTHR12192:SF2">
    <property type="entry name" value="GLUTATHIONE-SPECIFIC GAMMA-GLUTAMYLCYCLOTRANSFERASE 2"/>
    <property type="match status" value="1"/>
</dbReference>
<dbReference type="Pfam" id="PF04752">
    <property type="entry name" value="ChaC"/>
    <property type="match status" value="1"/>
</dbReference>
<dbReference type="SUPFAM" id="SSF110857">
    <property type="entry name" value="Gamma-glutamyl cyclotransferase-like"/>
    <property type="match status" value="1"/>
</dbReference>
<evidence type="ECO:0000250" key="1">
    <source>
        <dbReference type="UniProtKB" id="O75223"/>
    </source>
</evidence>
<evidence type="ECO:0000250" key="2">
    <source>
        <dbReference type="UniProtKB" id="P30184"/>
    </source>
</evidence>
<evidence type="ECO:0000250" key="3">
    <source>
        <dbReference type="UniProtKB" id="Q8GY54"/>
    </source>
</evidence>
<evidence type="ECO:0000269" key="4">
    <source>
    </source>
</evidence>
<evidence type="ECO:0000303" key="5">
    <source>
    </source>
</evidence>
<evidence type="ECO:0000305" key="6"/>
<evidence type="ECO:0000312" key="7">
    <source>
        <dbReference type="Araport" id="AT1G44790"/>
    </source>
</evidence>
<evidence type="ECO:0000312" key="8">
    <source>
        <dbReference type="EMBL" id="AAF78262.1"/>
    </source>
</evidence>
<organism>
    <name type="scientific">Arabidopsis thaliana</name>
    <name type="common">Mouse-ear cress</name>
    <dbReference type="NCBI Taxonomy" id="3702"/>
    <lineage>
        <taxon>Eukaryota</taxon>
        <taxon>Viridiplantae</taxon>
        <taxon>Streptophyta</taxon>
        <taxon>Embryophyta</taxon>
        <taxon>Tracheophyta</taxon>
        <taxon>Spermatophyta</taxon>
        <taxon>Magnoliopsida</taxon>
        <taxon>eudicotyledons</taxon>
        <taxon>Gunneridae</taxon>
        <taxon>Pentapetalae</taxon>
        <taxon>rosids</taxon>
        <taxon>malvids</taxon>
        <taxon>Brassicales</taxon>
        <taxon>Brassicaceae</taxon>
        <taxon>Camelineae</taxon>
        <taxon>Arabidopsis</taxon>
    </lineage>
</organism>
<reference key="1">
    <citation type="journal article" date="2000" name="Nature">
        <title>Sequence and analysis of chromosome 1 of the plant Arabidopsis thaliana.</title>
        <authorList>
            <person name="Theologis A."/>
            <person name="Ecker J.R."/>
            <person name="Palm C.J."/>
            <person name="Federspiel N.A."/>
            <person name="Kaul S."/>
            <person name="White O."/>
            <person name="Alonso J."/>
            <person name="Altafi H."/>
            <person name="Araujo R."/>
            <person name="Bowman C.L."/>
            <person name="Brooks S.Y."/>
            <person name="Buehler E."/>
            <person name="Chan A."/>
            <person name="Chao Q."/>
            <person name="Chen H."/>
            <person name="Cheuk R.F."/>
            <person name="Chin C.W."/>
            <person name="Chung M.K."/>
            <person name="Conn L."/>
            <person name="Conway A.B."/>
            <person name="Conway A.R."/>
            <person name="Creasy T.H."/>
            <person name="Dewar K."/>
            <person name="Dunn P."/>
            <person name="Etgu P."/>
            <person name="Feldblyum T.V."/>
            <person name="Feng J.-D."/>
            <person name="Fong B."/>
            <person name="Fujii C.Y."/>
            <person name="Gill J.E."/>
            <person name="Goldsmith A.D."/>
            <person name="Haas B."/>
            <person name="Hansen N.F."/>
            <person name="Hughes B."/>
            <person name="Huizar L."/>
            <person name="Hunter J.L."/>
            <person name="Jenkins J."/>
            <person name="Johnson-Hopson C."/>
            <person name="Khan S."/>
            <person name="Khaykin E."/>
            <person name="Kim C.J."/>
            <person name="Koo H.L."/>
            <person name="Kremenetskaia I."/>
            <person name="Kurtz D.B."/>
            <person name="Kwan A."/>
            <person name="Lam B."/>
            <person name="Langin-Hooper S."/>
            <person name="Lee A."/>
            <person name="Lee J.M."/>
            <person name="Lenz C.A."/>
            <person name="Li J.H."/>
            <person name="Li Y.-P."/>
            <person name="Lin X."/>
            <person name="Liu S.X."/>
            <person name="Liu Z.A."/>
            <person name="Luros J.S."/>
            <person name="Maiti R."/>
            <person name="Marziali A."/>
            <person name="Militscher J."/>
            <person name="Miranda M."/>
            <person name="Nguyen M."/>
            <person name="Nierman W.C."/>
            <person name="Osborne B.I."/>
            <person name="Pai G."/>
            <person name="Peterson J."/>
            <person name="Pham P.K."/>
            <person name="Rizzo M."/>
            <person name="Rooney T."/>
            <person name="Rowley D."/>
            <person name="Sakano H."/>
            <person name="Salzberg S.L."/>
            <person name="Schwartz J.R."/>
            <person name="Shinn P."/>
            <person name="Southwick A.M."/>
            <person name="Sun H."/>
            <person name="Tallon L.J."/>
            <person name="Tambunga G."/>
            <person name="Toriumi M.J."/>
            <person name="Town C.D."/>
            <person name="Utterback T."/>
            <person name="Van Aken S."/>
            <person name="Vaysberg M."/>
            <person name="Vysotskaia V.S."/>
            <person name="Walker M."/>
            <person name="Wu D."/>
            <person name="Yu G."/>
            <person name="Fraser C.M."/>
            <person name="Venter J.C."/>
            <person name="Davis R.W."/>
        </authorList>
    </citation>
    <scope>NUCLEOTIDE SEQUENCE [LARGE SCALE GENOMIC DNA]</scope>
    <source>
        <strain>cv. Columbia</strain>
    </source>
</reference>
<reference key="2">
    <citation type="journal article" date="2017" name="Plant J.">
        <title>Araport11: a complete reannotation of the Arabidopsis thaliana reference genome.</title>
        <authorList>
            <person name="Cheng C.Y."/>
            <person name="Krishnakumar V."/>
            <person name="Chan A.P."/>
            <person name="Thibaud-Nissen F."/>
            <person name="Schobel S."/>
            <person name="Town C.D."/>
        </authorList>
    </citation>
    <scope>GENOME REANNOTATION</scope>
    <source>
        <strain>cv. Columbia</strain>
    </source>
</reference>
<reference key="3">
    <citation type="journal article" date="2003" name="Science">
        <title>Empirical analysis of transcriptional activity in the Arabidopsis genome.</title>
        <authorList>
            <person name="Yamada K."/>
            <person name="Lim J."/>
            <person name="Dale J.M."/>
            <person name="Chen H."/>
            <person name="Shinn P."/>
            <person name="Palm C.J."/>
            <person name="Southwick A.M."/>
            <person name="Wu H.C."/>
            <person name="Kim C.J."/>
            <person name="Nguyen M."/>
            <person name="Pham P.K."/>
            <person name="Cheuk R.F."/>
            <person name="Karlin-Newmann G."/>
            <person name="Liu S.X."/>
            <person name="Lam B."/>
            <person name="Sakano H."/>
            <person name="Wu T."/>
            <person name="Yu G."/>
            <person name="Miranda M."/>
            <person name="Quach H.L."/>
            <person name="Tripp M."/>
            <person name="Chang C.H."/>
            <person name="Lee J.M."/>
            <person name="Toriumi M.J."/>
            <person name="Chan M.M."/>
            <person name="Tang C.C."/>
            <person name="Onodera C.S."/>
            <person name="Deng J.M."/>
            <person name="Akiyama K."/>
            <person name="Ansari Y."/>
            <person name="Arakawa T."/>
            <person name="Banh J."/>
            <person name="Banno F."/>
            <person name="Bowser L."/>
            <person name="Brooks S.Y."/>
            <person name="Carninci P."/>
            <person name="Chao Q."/>
            <person name="Choy N."/>
            <person name="Enju A."/>
            <person name="Goldsmith A.D."/>
            <person name="Gurjal M."/>
            <person name="Hansen N.F."/>
            <person name="Hayashizaki Y."/>
            <person name="Johnson-Hopson C."/>
            <person name="Hsuan V.W."/>
            <person name="Iida K."/>
            <person name="Karnes M."/>
            <person name="Khan S."/>
            <person name="Koesema E."/>
            <person name="Ishida J."/>
            <person name="Jiang P.X."/>
            <person name="Jones T."/>
            <person name="Kawai J."/>
            <person name="Kamiya A."/>
            <person name="Meyers C."/>
            <person name="Nakajima M."/>
            <person name="Narusaka M."/>
            <person name="Seki M."/>
            <person name="Sakurai T."/>
            <person name="Satou M."/>
            <person name="Tamse R."/>
            <person name="Vaysberg M."/>
            <person name="Wallender E.K."/>
            <person name="Wong C."/>
            <person name="Yamamura Y."/>
            <person name="Yuan S."/>
            <person name="Shinozaki K."/>
            <person name="Davis R.W."/>
            <person name="Theologis A."/>
            <person name="Ecker J.R."/>
        </authorList>
    </citation>
    <scope>NUCLEOTIDE SEQUENCE [LARGE SCALE MRNA]</scope>
    <source>
        <strain>cv. Columbia</strain>
    </source>
</reference>
<reference key="4">
    <citation type="submission" date="2006-07" db="EMBL/GenBank/DDBJ databases">
        <title>Large-scale analysis of RIKEN Arabidopsis full-length (RAFL) cDNAs.</title>
        <authorList>
            <person name="Totoki Y."/>
            <person name="Seki M."/>
            <person name="Ishida J."/>
            <person name="Nakajima M."/>
            <person name="Enju A."/>
            <person name="Kamiya A."/>
            <person name="Narusaka M."/>
            <person name="Shin-i T."/>
            <person name="Nakagawa M."/>
            <person name="Sakamoto N."/>
            <person name="Oishi K."/>
            <person name="Kohara Y."/>
            <person name="Kobayashi M."/>
            <person name="Toyoda A."/>
            <person name="Sakaki Y."/>
            <person name="Sakurai T."/>
            <person name="Iida K."/>
            <person name="Akiyama K."/>
            <person name="Satou M."/>
            <person name="Toyoda T."/>
            <person name="Konagaya A."/>
            <person name="Carninci P."/>
            <person name="Kawai J."/>
            <person name="Hayashizaki Y."/>
            <person name="Shinozaki K."/>
        </authorList>
    </citation>
    <scope>NUCLEOTIDE SEQUENCE [LARGE SCALE MRNA]</scope>
    <source>
        <strain>cv. Columbia</strain>
    </source>
</reference>
<reference key="5">
    <citation type="journal article" date="2015" name="Biochem. J.">
        <title>Defining the cytosolic pathway of glutathione degradation in Arabidopsis thaliana: role of the ChaC/GCG family of gamma-glutamyl cyclotransferases as glutathione-degrading enzymes and AtLAP1 as the Cys-Gly peptidase.</title>
        <authorList>
            <person name="Kumar S."/>
            <person name="Kaur A."/>
            <person name="Chattopadhyay B."/>
            <person name="Bachhawat A.K."/>
        </authorList>
    </citation>
    <scope>FUNCTION</scope>
    <scope>CATALYTIC ACTIVITY</scope>
    <scope>BIOPHYSICOCHEMICAL PROPERTIES</scope>
</reference>
<keyword id="KW-0963">Cytoplasm</keyword>
<keyword id="KW-0456">Lyase</keyword>
<keyword id="KW-1185">Reference proteome</keyword>
<feature type="chain" id="PRO_0000436855" description="Gamma-glutamylcyclotransferase 2-3">
    <location>
        <begin position="1"/>
        <end position="199"/>
    </location>
</feature>
<feature type="active site" description="Proton acceptor" evidence="1">
    <location>
        <position position="86"/>
    </location>
</feature>
<feature type="binding site" evidence="1">
    <location>
        <begin position="5"/>
        <end position="10"/>
    </location>
    <ligand>
        <name>substrate</name>
    </ligand>
</feature>
<accession>Q84QC1</accession>
<accession>Q9FPD4</accession>
<accession>Q9LPF2</accession>
<comment type="function">
    <text evidence="4">Converts GSH to 5-oxoproline and cysteine-glycine (Cys-Gly) dipeptide in vitro and plays a significant role in glutathione (GSH) homeostasis (PubMed:25716890). Has no activity towards gamma-glutamyl-L-cysteine but possesses very low activity towards gamma-glutamyl-L-alanine (PubMed:25716890).</text>
</comment>
<comment type="catalytic activity">
    <reaction evidence="4">
        <text>glutathione = L-cysteinylglycine + 5-oxo-L-proline</text>
        <dbReference type="Rhea" id="RHEA:47724"/>
        <dbReference type="ChEBI" id="CHEBI:57925"/>
        <dbReference type="ChEBI" id="CHEBI:58402"/>
        <dbReference type="ChEBI" id="CHEBI:61694"/>
        <dbReference type="EC" id="4.3.2.7"/>
    </reaction>
    <physiologicalReaction direction="left-to-right" evidence="4">
        <dbReference type="Rhea" id="RHEA:47725"/>
    </physiologicalReaction>
</comment>
<comment type="cofactor">
    <cofactor evidence="2">
        <name>Mn(2+)</name>
        <dbReference type="ChEBI" id="CHEBI:29035"/>
    </cofactor>
    <text evidence="2">Binds 2 Mn(2+) ions per subunit.</text>
</comment>
<comment type="biophysicochemical properties">
    <kinetics>
        <KM evidence="4">4.9 mM for glutathione</KM>
    </kinetics>
</comment>
<comment type="subcellular location">
    <subcellularLocation>
        <location evidence="3">Cytoplasm</location>
    </subcellularLocation>
</comment>
<comment type="similarity">
    <text evidence="6">Belongs to the gamma-glutamylcyclotransferase family.</text>
</comment>
<comment type="sequence caution" evidence="6">
    <conflict type="erroneous gene model prediction">
        <sequence resource="EMBL-CDS" id="AAF78262"/>
    </conflict>
</comment>
<name>GCT23_ARATH</name>
<proteinExistence type="evidence at protein level"/>